<proteinExistence type="inferred from homology"/>
<organism>
    <name type="scientific">Limosilactobacillus fermentum (strain CECT 5716 / Lc40)</name>
    <name type="common">Lactobacillus fermentum</name>
    <dbReference type="NCBI Taxonomy" id="712938"/>
    <lineage>
        <taxon>Bacteria</taxon>
        <taxon>Bacillati</taxon>
        <taxon>Bacillota</taxon>
        <taxon>Bacilli</taxon>
        <taxon>Lactobacillales</taxon>
        <taxon>Lactobacillaceae</taxon>
        <taxon>Limosilactobacillus</taxon>
    </lineage>
</organism>
<gene>
    <name evidence="1" type="primary">ecfT</name>
    <name type="ordered locus">LC40_0952</name>
</gene>
<accession>D8IIP4</accession>
<reference key="1">
    <citation type="journal article" date="2010" name="J. Bacteriol.">
        <title>Complete genome sequence of Lactobacillus fermentum CECT 5716, a probiotic strain isolated from human milk.</title>
        <authorList>
            <person name="Jimenez E."/>
            <person name="Langa S."/>
            <person name="Martin V."/>
            <person name="Arroyo R."/>
            <person name="Martin R."/>
            <person name="Fernandez L."/>
            <person name="Rodriguez J.M."/>
        </authorList>
    </citation>
    <scope>NUCLEOTIDE SEQUENCE [LARGE SCALE GENOMIC DNA]</scope>
    <source>
        <strain>CECT 5716 / Lc40</strain>
    </source>
</reference>
<dbReference type="EMBL" id="CP002033">
    <property type="protein sequence ID" value="ADJ41523.1"/>
    <property type="molecule type" value="Genomic_DNA"/>
</dbReference>
<dbReference type="RefSeq" id="WP_003681619.1">
    <property type="nucleotide sequence ID" value="NZ_JACTGS010000013.1"/>
</dbReference>
<dbReference type="SMR" id="D8IIP4"/>
<dbReference type="KEGG" id="lfr:LC40_0952"/>
<dbReference type="PATRIC" id="fig|712938.3.peg.1867"/>
<dbReference type="HOGENOM" id="CLU_056469_2_2_9"/>
<dbReference type="GO" id="GO:0005886">
    <property type="term" value="C:plasma membrane"/>
    <property type="evidence" value="ECO:0007669"/>
    <property type="project" value="UniProtKB-SubCell"/>
</dbReference>
<dbReference type="GO" id="GO:0022857">
    <property type="term" value="F:transmembrane transporter activity"/>
    <property type="evidence" value="ECO:0007669"/>
    <property type="project" value="UniProtKB-UniRule"/>
</dbReference>
<dbReference type="CDD" id="cd16914">
    <property type="entry name" value="EcfT"/>
    <property type="match status" value="1"/>
</dbReference>
<dbReference type="HAMAP" id="MF_01461">
    <property type="entry name" value="EcfT"/>
    <property type="match status" value="1"/>
</dbReference>
<dbReference type="InterPro" id="IPR003339">
    <property type="entry name" value="ABC/ECF_trnsptr_transmembrane"/>
</dbReference>
<dbReference type="InterPro" id="IPR024919">
    <property type="entry name" value="EcfT"/>
</dbReference>
<dbReference type="PANTHER" id="PTHR33514">
    <property type="entry name" value="PROTEIN ABCI12, CHLOROPLASTIC"/>
    <property type="match status" value="1"/>
</dbReference>
<dbReference type="PANTHER" id="PTHR33514:SF13">
    <property type="entry name" value="PROTEIN ABCI12, CHLOROPLASTIC"/>
    <property type="match status" value="1"/>
</dbReference>
<dbReference type="Pfam" id="PF02361">
    <property type="entry name" value="CbiQ"/>
    <property type="match status" value="1"/>
</dbReference>
<comment type="function">
    <text evidence="1">Transmembrane (T) component of an energy-coupling factor (ECF) ABC-transporter complex. Unlike classic ABC transporters this ECF transporter provides the energy necessary to transport a number of different substrates.</text>
</comment>
<comment type="subunit">
    <text evidence="1">Forms a stable energy-coupling factor (ECF) transporter complex composed of 2 membrane-embedded substrate-binding proteins (S component), 2 ATP-binding proteins (A component) and 2 transmembrane proteins (T component). May be able to interact with more than 1 S component at a time (By similarity).</text>
</comment>
<comment type="subcellular location">
    <subcellularLocation>
        <location evidence="1">Cell membrane</location>
        <topology evidence="1">Multi-pass membrane protein</topology>
    </subcellularLocation>
</comment>
<comment type="similarity">
    <text evidence="1">Belongs to the energy-coupling factor EcfT family.</text>
</comment>
<feature type="chain" id="PRO_0000408992" description="Energy-coupling factor transporter transmembrane protein EcfT">
    <location>
        <begin position="1"/>
        <end position="267"/>
    </location>
</feature>
<feature type="transmembrane region" description="Helical" evidence="1">
    <location>
        <begin position="30"/>
        <end position="50"/>
    </location>
</feature>
<feature type="transmembrane region" description="Helical" evidence="1">
    <location>
        <begin position="67"/>
        <end position="87"/>
    </location>
</feature>
<feature type="transmembrane region" description="Helical" evidence="1">
    <location>
        <begin position="110"/>
        <end position="130"/>
    </location>
</feature>
<feature type="transmembrane region" description="Helical" evidence="1">
    <location>
        <begin position="152"/>
        <end position="172"/>
    </location>
</feature>
<feature type="transmembrane region" description="Helical" evidence="1">
    <location>
        <begin position="247"/>
        <end position="267"/>
    </location>
</feature>
<sequence>MNSRVLFGSFVPVDSVLHRLDPRLKLVTCFWYVVIIFFAKGPLTYLLLVAMLGAMIGLSKVPLKMYWAGLKPLLWVIGLTIAIQVLFSSGGHVYWHWGLMAITSGGINQALVILARFILIVLASTVLTATTPPLRLADAIESLMKPLKKIKVPVNQIAMMISIALRFIPTIMDEVNTIVKAQQARGVDFTSGSVYTRVKRMVPIMVPLFVGAFRRAEDLAVAMEARGYDPDQERTRYRQLTWRRPDSIALAVVVIVSVLFFVARILL</sequence>
<protein>
    <recommendedName>
        <fullName evidence="1">Energy-coupling factor transporter transmembrane protein EcfT</fullName>
        <shortName evidence="1">ECF transporter T component EcfT</shortName>
    </recommendedName>
</protein>
<keyword id="KW-1003">Cell membrane</keyword>
<keyword id="KW-0472">Membrane</keyword>
<keyword id="KW-0812">Transmembrane</keyword>
<keyword id="KW-1133">Transmembrane helix</keyword>
<keyword id="KW-0813">Transport</keyword>
<name>ECFT_LIMFC</name>
<evidence type="ECO:0000255" key="1">
    <source>
        <dbReference type="HAMAP-Rule" id="MF_01461"/>
    </source>
</evidence>